<protein>
    <recommendedName>
        <fullName>Alcohol dehydrogenase</fullName>
        <shortName>ADH</shortName>
        <ecNumber>1.1.1.1</ecNumber>
    </recommendedName>
</protein>
<proteinExistence type="inferred from homology"/>
<dbReference type="EC" id="1.1.1.1"/>
<dbReference type="EMBL" id="CP000029">
    <property type="protein sequence ID" value="AAW53675.1"/>
    <property type="molecule type" value="Genomic_DNA"/>
</dbReference>
<dbReference type="SMR" id="Q5HRD6"/>
<dbReference type="STRING" id="176279.SERP0257"/>
<dbReference type="KEGG" id="ser:SERP0257"/>
<dbReference type="eggNOG" id="COG1064">
    <property type="taxonomic scope" value="Bacteria"/>
</dbReference>
<dbReference type="HOGENOM" id="CLU_026673_20_1_9"/>
<dbReference type="Proteomes" id="UP000000531">
    <property type="component" value="Chromosome"/>
</dbReference>
<dbReference type="GO" id="GO:0004022">
    <property type="term" value="F:alcohol dehydrogenase (NAD+) activity"/>
    <property type="evidence" value="ECO:0007669"/>
    <property type="project" value="UniProtKB-EC"/>
</dbReference>
<dbReference type="GO" id="GO:0008270">
    <property type="term" value="F:zinc ion binding"/>
    <property type="evidence" value="ECO:0007669"/>
    <property type="project" value="InterPro"/>
</dbReference>
<dbReference type="CDD" id="cd08297">
    <property type="entry name" value="CAD3"/>
    <property type="match status" value="1"/>
</dbReference>
<dbReference type="FunFam" id="3.40.50.720:FF:000039">
    <property type="entry name" value="Alcohol dehydrogenase AdhP"/>
    <property type="match status" value="1"/>
</dbReference>
<dbReference type="Gene3D" id="3.90.180.10">
    <property type="entry name" value="Medium-chain alcohol dehydrogenases, catalytic domain"/>
    <property type="match status" value="1"/>
</dbReference>
<dbReference type="Gene3D" id="3.40.50.720">
    <property type="entry name" value="NAD(P)-binding Rossmann-like Domain"/>
    <property type="match status" value="1"/>
</dbReference>
<dbReference type="InterPro" id="IPR013149">
    <property type="entry name" value="ADH-like_C"/>
</dbReference>
<dbReference type="InterPro" id="IPR013154">
    <property type="entry name" value="ADH-like_N"/>
</dbReference>
<dbReference type="InterPro" id="IPR002328">
    <property type="entry name" value="ADH_Zn_CS"/>
</dbReference>
<dbReference type="InterPro" id="IPR029752">
    <property type="entry name" value="D-isomer_DH_CS1"/>
</dbReference>
<dbReference type="InterPro" id="IPR011032">
    <property type="entry name" value="GroES-like_sf"/>
</dbReference>
<dbReference type="InterPro" id="IPR036291">
    <property type="entry name" value="NAD(P)-bd_dom_sf"/>
</dbReference>
<dbReference type="InterPro" id="IPR020843">
    <property type="entry name" value="PKS_ER"/>
</dbReference>
<dbReference type="NCBIfam" id="NF006940">
    <property type="entry name" value="PRK09422.1"/>
    <property type="match status" value="1"/>
</dbReference>
<dbReference type="PANTHER" id="PTHR42940">
    <property type="entry name" value="ALCOHOL DEHYDROGENASE 1-RELATED"/>
    <property type="match status" value="1"/>
</dbReference>
<dbReference type="PANTHER" id="PTHR42940:SF8">
    <property type="entry name" value="VACUOLAR PROTEIN SORTING-ASSOCIATED PROTEIN 11"/>
    <property type="match status" value="1"/>
</dbReference>
<dbReference type="Pfam" id="PF08240">
    <property type="entry name" value="ADH_N"/>
    <property type="match status" value="1"/>
</dbReference>
<dbReference type="Pfam" id="PF00107">
    <property type="entry name" value="ADH_zinc_N"/>
    <property type="match status" value="1"/>
</dbReference>
<dbReference type="SMART" id="SM00829">
    <property type="entry name" value="PKS_ER"/>
    <property type="match status" value="1"/>
</dbReference>
<dbReference type="SUPFAM" id="SSF50129">
    <property type="entry name" value="GroES-like"/>
    <property type="match status" value="1"/>
</dbReference>
<dbReference type="SUPFAM" id="SSF51735">
    <property type="entry name" value="NAD(P)-binding Rossmann-fold domains"/>
    <property type="match status" value="1"/>
</dbReference>
<dbReference type="PROSITE" id="PS00059">
    <property type="entry name" value="ADH_ZINC"/>
    <property type="match status" value="1"/>
</dbReference>
<organism>
    <name type="scientific">Staphylococcus epidermidis (strain ATCC 35984 / DSM 28319 / BCRC 17069 / CCUG 31568 / BM 3577 / RP62A)</name>
    <dbReference type="NCBI Taxonomy" id="176279"/>
    <lineage>
        <taxon>Bacteria</taxon>
        <taxon>Bacillati</taxon>
        <taxon>Bacillota</taxon>
        <taxon>Bacilli</taxon>
        <taxon>Bacillales</taxon>
        <taxon>Staphylococcaceae</taxon>
        <taxon>Staphylococcus</taxon>
    </lineage>
</organism>
<name>ADH_STAEQ</name>
<reference key="1">
    <citation type="journal article" date="2005" name="J. Bacteriol.">
        <title>Insights on evolution of virulence and resistance from the complete genome analysis of an early methicillin-resistant Staphylococcus aureus strain and a biofilm-producing methicillin-resistant Staphylococcus epidermidis strain.</title>
        <authorList>
            <person name="Gill S.R."/>
            <person name="Fouts D.E."/>
            <person name="Archer G.L."/>
            <person name="Mongodin E.F."/>
            <person name="DeBoy R.T."/>
            <person name="Ravel J."/>
            <person name="Paulsen I.T."/>
            <person name="Kolonay J.F."/>
            <person name="Brinkac L.M."/>
            <person name="Beanan M.J."/>
            <person name="Dodson R.J."/>
            <person name="Daugherty S.C."/>
            <person name="Madupu R."/>
            <person name="Angiuoli S.V."/>
            <person name="Durkin A.S."/>
            <person name="Haft D.H."/>
            <person name="Vamathevan J.J."/>
            <person name="Khouri H."/>
            <person name="Utterback T.R."/>
            <person name="Lee C."/>
            <person name="Dimitrov G."/>
            <person name="Jiang L."/>
            <person name="Qin H."/>
            <person name="Weidman J."/>
            <person name="Tran K."/>
            <person name="Kang K.H."/>
            <person name="Hance I.R."/>
            <person name="Nelson K.E."/>
            <person name="Fraser C.M."/>
        </authorList>
    </citation>
    <scope>NUCLEOTIDE SEQUENCE [LARGE SCALE GENOMIC DNA]</scope>
    <source>
        <strain>ATCC 35984 / DSM 28319 / BCRC 17069 / CCUG 31568 / BM 3577 / RP62A</strain>
    </source>
</reference>
<feature type="chain" id="PRO_0000273041" description="Alcohol dehydrogenase">
    <location>
        <begin position="1"/>
        <end position="340"/>
    </location>
</feature>
<feature type="binding site" evidence="1">
    <location>
        <position position="37"/>
    </location>
    <ligand>
        <name>Zn(2+)</name>
        <dbReference type="ChEBI" id="CHEBI:29105"/>
        <label>1</label>
        <note>catalytic</note>
    </ligand>
</feature>
<feature type="binding site" evidence="1">
    <location>
        <position position="58"/>
    </location>
    <ligand>
        <name>Zn(2+)</name>
        <dbReference type="ChEBI" id="CHEBI:29105"/>
        <label>1</label>
        <note>catalytic</note>
    </ligand>
</feature>
<feature type="binding site" evidence="1">
    <location>
        <position position="89"/>
    </location>
    <ligand>
        <name>Zn(2+)</name>
        <dbReference type="ChEBI" id="CHEBI:29105"/>
        <label>2</label>
    </ligand>
</feature>
<feature type="binding site" evidence="1">
    <location>
        <position position="92"/>
    </location>
    <ligand>
        <name>Zn(2+)</name>
        <dbReference type="ChEBI" id="CHEBI:29105"/>
        <label>2</label>
    </ligand>
</feature>
<feature type="binding site" evidence="1">
    <location>
        <position position="95"/>
    </location>
    <ligand>
        <name>Zn(2+)</name>
        <dbReference type="ChEBI" id="CHEBI:29105"/>
        <label>2</label>
    </ligand>
</feature>
<feature type="binding site" evidence="1">
    <location>
        <position position="103"/>
    </location>
    <ligand>
        <name>Zn(2+)</name>
        <dbReference type="ChEBI" id="CHEBI:29105"/>
        <label>2</label>
    </ligand>
</feature>
<feature type="binding site" evidence="1">
    <location>
        <position position="145"/>
    </location>
    <ligand>
        <name>Zn(2+)</name>
        <dbReference type="ChEBI" id="CHEBI:29105"/>
        <label>1</label>
        <note>catalytic</note>
    </ligand>
</feature>
<sequence length="340" mass="36451">MKAAVVTKDHRVSIEEKRLRELKPGEALVKTEYCGVCHTDLHVKNADFGDVTGVTLGHEGIGRVIEVADNVDSLKVGDRVSIAWMYAACGNCEYCTTGRETLCRDVLNAGYTVDGAMAEEVIVDANYAVKVPENLDPAAASSITCAGVTTYKAVKVSGIEPGQWLGVFGVGGLGNLALQYAKNVMGAKVVAFDINDDKLNFAKELGADAIINSTNVDPIEEVNRLTNNKGLDATVITAVAKTPFNQAVDVVKAGARVVAVGLPVDKMDLDIPRLVLDGIEVVGSLVGTRQDLREAFQFAAENKVIPKVQLRQLSEINDIFDEMEKGTITGRMVIDMKSSH</sequence>
<gene>
    <name type="primary">adh</name>
    <name type="ordered locus">SERP0257</name>
</gene>
<comment type="catalytic activity">
    <reaction>
        <text>a primary alcohol + NAD(+) = an aldehyde + NADH + H(+)</text>
        <dbReference type="Rhea" id="RHEA:10736"/>
        <dbReference type="ChEBI" id="CHEBI:15378"/>
        <dbReference type="ChEBI" id="CHEBI:15734"/>
        <dbReference type="ChEBI" id="CHEBI:17478"/>
        <dbReference type="ChEBI" id="CHEBI:57540"/>
        <dbReference type="ChEBI" id="CHEBI:57945"/>
        <dbReference type="EC" id="1.1.1.1"/>
    </reaction>
</comment>
<comment type="catalytic activity">
    <reaction>
        <text>a secondary alcohol + NAD(+) = a ketone + NADH + H(+)</text>
        <dbReference type="Rhea" id="RHEA:10740"/>
        <dbReference type="ChEBI" id="CHEBI:15378"/>
        <dbReference type="ChEBI" id="CHEBI:17087"/>
        <dbReference type="ChEBI" id="CHEBI:35681"/>
        <dbReference type="ChEBI" id="CHEBI:57540"/>
        <dbReference type="ChEBI" id="CHEBI:57945"/>
        <dbReference type="EC" id="1.1.1.1"/>
    </reaction>
</comment>
<comment type="cofactor">
    <cofactor evidence="1">
        <name>Zn(2+)</name>
        <dbReference type="ChEBI" id="CHEBI:29105"/>
    </cofactor>
    <text evidence="1">Binds 2 Zn(2+) ions per subunit.</text>
</comment>
<comment type="similarity">
    <text evidence="2">Belongs to the zinc-containing alcohol dehydrogenase family.</text>
</comment>
<accession>Q5HRD6</accession>
<keyword id="KW-0479">Metal-binding</keyword>
<keyword id="KW-0520">NAD</keyword>
<keyword id="KW-0560">Oxidoreductase</keyword>
<keyword id="KW-1185">Reference proteome</keyword>
<keyword id="KW-0862">Zinc</keyword>
<evidence type="ECO:0000250" key="1"/>
<evidence type="ECO:0000305" key="2"/>